<accession>E0D202</accession>
<dbReference type="EC" id="2.3.1.-" evidence="1"/>
<dbReference type="EC" id="4.1.1.-" evidence="7 8"/>
<dbReference type="EMBL" id="AB469193">
    <property type="protein sequence ID" value="BAJ16467.2"/>
    <property type="molecule type" value="Genomic_DNA"/>
</dbReference>
<dbReference type="PDB" id="7VEE">
    <property type="method" value="X-ray"/>
    <property type="resolution" value="2.55 A"/>
    <property type="chains" value="A=13-926"/>
</dbReference>
<dbReference type="PDB" id="7VEF">
    <property type="method" value="X-ray"/>
    <property type="resolution" value="2.65 A"/>
    <property type="chains" value="A=13-926"/>
</dbReference>
<dbReference type="PDB" id="8IN9">
    <property type="method" value="X-ray"/>
    <property type="resolution" value="3.40 A"/>
    <property type="chains" value="A=13-926, B=933-1024"/>
</dbReference>
<dbReference type="PDBsum" id="7VEE"/>
<dbReference type="PDBsum" id="7VEF"/>
<dbReference type="PDBsum" id="8IN9"/>
<dbReference type="GO" id="GO:0004315">
    <property type="term" value="F:3-oxoacyl-[acyl-carrier-protein] synthase activity"/>
    <property type="evidence" value="ECO:0007669"/>
    <property type="project" value="InterPro"/>
</dbReference>
<dbReference type="GO" id="GO:0004312">
    <property type="term" value="F:fatty acid synthase activity"/>
    <property type="evidence" value="ECO:0007669"/>
    <property type="project" value="TreeGrafter"/>
</dbReference>
<dbReference type="GO" id="GO:0016829">
    <property type="term" value="F:lyase activity"/>
    <property type="evidence" value="ECO:0007669"/>
    <property type="project" value="UniProtKB-KW"/>
</dbReference>
<dbReference type="GO" id="GO:0031177">
    <property type="term" value="F:phosphopantetheine binding"/>
    <property type="evidence" value="ECO:0007669"/>
    <property type="project" value="InterPro"/>
</dbReference>
<dbReference type="GO" id="GO:0017000">
    <property type="term" value="P:antibiotic biosynthetic process"/>
    <property type="evidence" value="ECO:0007669"/>
    <property type="project" value="UniProtKB-KW"/>
</dbReference>
<dbReference type="GO" id="GO:0006633">
    <property type="term" value="P:fatty acid biosynthetic process"/>
    <property type="evidence" value="ECO:0007669"/>
    <property type="project" value="InterPro"/>
</dbReference>
<dbReference type="GO" id="GO:0044550">
    <property type="term" value="P:secondary metabolite biosynthetic process"/>
    <property type="evidence" value="ECO:0007669"/>
    <property type="project" value="UniProtKB-ARBA"/>
</dbReference>
<dbReference type="CDD" id="cd08952">
    <property type="entry name" value="KR_1_SDR_x"/>
    <property type="match status" value="3"/>
</dbReference>
<dbReference type="CDD" id="cd08956">
    <property type="entry name" value="KR_3_FAS_SDR_x"/>
    <property type="match status" value="1"/>
</dbReference>
<dbReference type="CDD" id="cd00833">
    <property type="entry name" value="PKS"/>
    <property type="match status" value="5"/>
</dbReference>
<dbReference type="FunFam" id="3.40.47.10:FF:000019">
    <property type="entry name" value="Polyketide synthase type I"/>
    <property type="match status" value="5"/>
</dbReference>
<dbReference type="FunFam" id="3.40.366.10:FF:000002">
    <property type="entry name" value="Probable polyketide synthase 2"/>
    <property type="match status" value="3"/>
</dbReference>
<dbReference type="FunFam" id="1.10.1200.10:FF:000007">
    <property type="entry name" value="Probable polyketide synthase pks17"/>
    <property type="match status" value="4"/>
</dbReference>
<dbReference type="Gene3D" id="3.30.70.3290">
    <property type="match status" value="5"/>
</dbReference>
<dbReference type="Gene3D" id="3.40.47.10">
    <property type="match status" value="5"/>
</dbReference>
<dbReference type="Gene3D" id="3.40.50.11460">
    <property type="match status" value="1"/>
</dbReference>
<dbReference type="Gene3D" id="6.10.140.1830">
    <property type="match status" value="2"/>
</dbReference>
<dbReference type="Gene3D" id="1.10.1200.10">
    <property type="entry name" value="ACP-like"/>
    <property type="match status" value="5"/>
</dbReference>
<dbReference type="Gene3D" id="3.40.366.10">
    <property type="entry name" value="Malonyl-Coenzyme A Acyl Carrier Protein, domain 2"/>
    <property type="match status" value="5"/>
</dbReference>
<dbReference type="Gene3D" id="3.40.50.720">
    <property type="entry name" value="NAD(P)-binding Rossmann-like Domain"/>
    <property type="match status" value="4"/>
</dbReference>
<dbReference type="Gene3D" id="3.10.129.110">
    <property type="entry name" value="Polyketide synthase dehydratase"/>
    <property type="match status" value="1"/>
</dbReference>
<dbReference type="InterPro" id="IPR001227">
    <property type="entry name" value="Ac_transferase_dom_sf"/>
</dbReference>
<dbReference type="InterPro" id="IPR036736">
    <property type="entry name" value="ACP-like_sf"/>
</dbReference>
<dbReference type="InterPro" id="IPR014043">
    <property type="entry name" value="Acyl_transferase_dom"/>
</dbReference>
<dbReference type="InterPro" id="IPR016035">
    <property type="entry name" value="Acyl_Trfase/lysoPLipase"/>
</dbReference>
<dbReference type="InterPro" id="IPR018201">
    <property type="entry name" value="Ketoacyl_synth_AS"/>
</dbReference>
<dbReference type="InterPro" id="IPR014031">
    <property type="entry name" value="Ketoacyl_synth_C"/>
</dbReference>
<dbReference type="InterPro" id="IPR014030">
    <property type="entry name" value="Ketoacyl_synth_N"/>
</dbReference>
<dbReference type="InterPro" id="IPR016036">
    <property type="entry name" value="Malonyl_transacylase_ACP-bd"/>
</dbReference>
<dbReference type="InterPro" id="IPR036291">
    <property type="entry name" value="NAD(P)-bd_dom_sf"/>
</dbReference>
<dbReference type="InterPro" id="IPR032821">
    <property type="entry name" value="PKS_assoc"/>
</dbReference>
<dbReference type="InterPro" id="IPR020841">
    <property type="entry name" value="PKS_Beta-ketoAc_synthase_dom"/>
</dbReference>
<dbReference type="InterPro" id="IPR041618">
    <property type="entry name" value="PKS_DE"/>
</dbReference>
<dbReference type="InterPro" id="IPR042104">
    <property type="entry name" value="PKS_dehydratase_sf"/>
</dbReference>
<dbReference type="InterPro" id="IPR020807">
    <property type="entry name" value="PKS_DH"/>
</dbReference>
<dbReference type="InterPro" id="IPR049551">
    <property type="entry name" value="PKS_DH_C"/>
</dbReference>
<dbReference type="InterPro" id="IPR049552">
    <property type="entry name" value="PKS_DH_N"/>
</dbReference>
<dbReference type="InterPro" id="IPR013968">
    <property type="entry name" value="PKS_KR"/>
</dbReference>
<dbReference type="InterPro" id="IPR049900">
    <property type="entry name" value="PKS_mFAS_DH"/>
</dbReference>
<dbReference type="InterPro" id="IPR050091">
    <property type="entry name" value="PKS_NRPS_Biosynth_Enz"/>
</dbReference>
<dbReference type="InterPro" id="IPR020806">
    <property type="entry name" value="PKS_PP-bd"/>
</dbReference>
<dbReference type="InterPro" id="IPR009081">
    <property type="entry name" value="PP-bd_ACP"/>
</dbReference>
<dbReference type="InterPro" id="IPR006162">
    <property type="entry name" value="Ppantetheine_attach_site"/>
</dbReference>
<dbReference type="InterPro" id="IPR016039">
    <property type="entry name" value="Thiolase-like"/>
</dbReference>
<dbReference type="NCBIfam" id="NF045894">
    <property type="entry name" value="PKS_plus_SDR"/>
    <property type="match status" value="2"/>
</dbReference>
<dbReference type="PANTHER" id="PTHR43775">
    <property type="entry name" value="FATTY ACID SYNTHASE"/>
    <property type="match status" value="1"/>
</dbReference>
<dbReference type="PANTHER" id="PTHR43775:SF51">
    <property type="entry name" value="INACTIVE PHENOLPHTHIOCEROL SYNTHESIS POLYKETIDE SYNTHASE TYPE I PKS1-RELATED"/>
    <property type="match status" value="1"/>
</dbReference>
<dbReference type="Pfam" id="PF00698">
    <property type="entry name" value="Acyl_transf_1"/>
    <property type="match status" value="5"/>
</dbReference>
<dbReference type="Pfam" id="PF16197">
    <property type="entry name" value="KAsynt_C_assoc"/>
    <property type="match status" value="5"/>
</dbReference>
<dbReference type="Pfam" id="PF00109">
    <property type="entry name" value="ketoacyl-synt"/>
    <property type="match status" value="5"/>
</dbReference>
<dbReference type="Pfam" id="PF02801">
    <property type="entry name" value="Ketoacyl-synt_C"/>
    <property type="match status" value="5"/>
</dbReference>
<dbReference type="Pfam" id="PF08659">
    <property type="entry name" value="KR"/>
    <property type="match status" value="4"/>
</dbReference>
<dbReference type="Pfam" id="PF18369">
    <property type="entry name" value="PKS_DE"/>
    <property type="match status" value="2"/>
</dbReference>
<dbReference type="Pfam" id="PF21089">
    <property type="entry name" value="PKS_DH_N"/>
    <property type="match status" value="1"/>
</dbReference>
<dbReference type="Pfam" id="PF00550">
    <property type="entry name" value="PP-binding"/>
    <property type="match status" value="5"/>
</dbReference>
<dbReference type="Pfam" id="PF14765">
    <property type="entry name" value="PS-DH"/>
    <property type="match status" value="1"/>
</dbReference>
<dbReference type="SMART" id="SM00827">
    <property type="entry name" value="PKS_AT"/>
    <property type="match status" value="5"/>
</dbReference>
<dbReference type="SMART" id="SM00826">
    <property type="entry name" value="PKS_DH"/>
    <property type="match status" value="1"/>
</dbReference>
<dbReference type="SMART" id="SM00822">
    <property type="entry name" value="PKS_KR"/>
    <property type="match status" value="4"/>
</dbReference>
<dbReference type="SMART" id="SM00825">
    <property type="entry name" value="PKS_KS"/>
    <property type="match status" value="5"/>
</dbReference>
<dbReference type="SMART" id="SM00823">
    <property type="entry name" value="PKS_PP"/>
    <property type="match status" value="5"/>
</dbReference>
<dbReference type="SMART" id="SM01294">
    <property type="entry name" value="PKS_PP_betabranch"/>
    <property type="match status" value="5"/>
</dbReference>
<dbReference type="SUPFAM" id="SSF47336">
    <property type="entry name" value="ACP-like"/>
    <property type="match status" value="5"/>
</dbReference>
<dbReference type="SUPFAM" id="SSF52151">
    <property type="entry name" value="FabD/lysophospholipase-like"/>
    <property type="match status" value="5"/>
</dbReference>
<dbReference type="SUPFAM" id="SSF51735">
    <property type="entry name" value="NAD(P)-binding Rossmann-fold domains"/>
    <property type="match status" value="8"/>
</dbReference>
<dbReference type="SUPFAM" id="SSF55048">
    <property type="entry name" value="Probable ACP-binding domain of malonyl-CoA ACP transacylase"/>
    <property type="match status" value="5"/>
</dbReference>
<dbReference type="SUPFAM" id="SSF53901">
    <property type="entry name" value="Thiolase-like"/>
    <property type="match status" value="5"/>
</dbReference>
<dbReference type="PROSITE" id="PS50075">
    <property type="entry name" value="CARRIER"/>
    <property type="match status" value="5"/>
</dbReference>
<dbReference type="PROSITE" id="PS00606">
    <property type="entry name" value="KS3_1"/>
    <property type="match status" value="4"/>
</dbReference>
<dbReference type="PROSITE" id="PS52004">
    <property type="entry name" value="KS3_2"/>
    <property type="match status" value="5"/>
</dbReference>
<dbReference type="PROSITE" id="PS00012">
    <property type="entry name" value="PHOSPHOPANTETHEINE"/>
    <property type="match status" value="4"/>
</dbReference>
<dbReference type="PROSITE" id="PS52019">
    <property type="entry name" value="PKS_MFAS_DH"/>
    <property type="match status" value="1"/>
</dbReference>
<proteinExistence type="evidence at protein level"/>
<evidence type="ECO:0000250" key="1">
    <source>
        <dbReference type="UniProtKB" id="I6XD69"/>
    </source>
</evidence>
<evidence type="ECO:0000255" key="2">
    <source>
        <dbReference type="PROSITE-ProRule" id="PRU00258"/>
    </source>
</evidence>
<evidence type="ECO:0000255" key="3">
    <source>
        <dbReference type="PROSITE-ProRule" id="PRU01348"/>
    </source>
</evidence>
<evidence type="ECO:0000255" key="4">
    <source>
        <dbReference type="PROSITE-ProRule" id="PRU01363"/>
    </source>
</evidence>
<evidence type="ECO:0000256" key="5">
    <source>
        <dbReference type="SAM" id="MobiDB-lite"/>
    </source>
</evidence>
<evidence type="ECO:0000269" key="6">
    <source>
    </source>
</evidence>
<evidence type="ECO:0000269" key="7">
    <source>
    </source>
</evidence>
<evidence type="ECO:0000269" key="8">
    <source>
    </source>
</evidence>
<evidence type="ECO:0000269" key="9">
    <source>
    </source>
</evidence>
<evidence type="ECO:0000269" key="10">
    <source ref="5"/>
</evidence>
<evidence type="ECO:0000303" key="11">
    <source>
    </source>
</evidence>
<evidence type="ECO:0000305" key="12"/>
<evidence type="ECO:0000305" key="13">
    <source>
    </source>
</evidence>
<evidence type="ECO:0000305" key="14">
    <source>
    </source>
</evidence>
<evidence type="ECO:0000312" key="15">
    <source>
        <dbReference type="EMBL" id="BAJ16467.2"/>
    </source>
</evidence>
<evidence type="ECO:0007744" key="16">
    <source>
        <dbReference type="PDB" id="7VEE"/>
    </source>
</evidence>
<evidence type="ECO:0007744" key="17">
    <source>
        <dbReference type="PDB" id="7VEF"/>
    </source>
</evidence>
<evidence type="ECO:0007744" key="18">
    <source>
        <dbReference type="PDB" id="8IN9"/>
    </source>
</evidence>
<evidence type="ECO:0007829" key="19">
    <source>
        <dbReference type="PDB" id="7VEE"/>
    </source>
</evidence>
<evidence type="ECO:0007829" key="20">
    <source>
        <dbReference type="PDB" id="7VEF"/>
    </source>
</evidence>
<evidence type="ECO:0007829" key="21">
    <source>
        <dbReference type="PDB" id="8IN9"/>
    </source>
</evidence>
<keyword id="KW-0002">3D-structure</keyword>
<keyword id="KW-0012">Acyltransferase</keyword>
<keyword id="KW-0045">Antibiotic biosynthesis</keyword>
<keyword id="KW-0456">Lyase</keyword>
<keyword id="KW-0511">Multifunctional enzyme</keyword>
<keyword id="KW-0596">Phosphopantetheine</keyword>
<keyword id="KW-0597">Phosphoprotein</keyword>
<keyword id="KW-0677">Repeat</keyword>
<keyword id="KW-0808">Transferase</keyword>
<comment type="function">
    <text evidence="6 7 8 13">First protein in the synthesis of the 16-membered macrolide antibiotics FD-891 and FD-892 (PubMed:20589823). Composed of 5 modules; the first is a loading module (LM) that synthesizes a starter unit used by the first elongation module for polyketide chain elongation (PubMed:34985877, PubMed:37216195). The starter unit is extended by multiple rounds of addition of malonyl-CoA or methylmalonyl-CoA, and other modifications to help generate the final products (Probable) (PubMed:20589823). The loading module (residues 1-927, LM with an inactive acyltransferase domain) preferentially decarboxylates malonyl-GfsA acyl carrier protein of the LM (ACP-LM) over methylmalonyl-GfsA ACP-LM and has no activity on malonyl-CoA or methymalonyl-CoA (PubMed:34985877). LM decarboxylates malonyl-ACP-LM better than the malonyl-ACP-1 module of GfsA (i.e. the next module in the same protein) and has no activity on other malonyl-ACP modules (PubMed:37216195).</text>
</comment>
<comment type="cofactor">
    <cofactor evidence="2">
        <name>pantetheine 4'-phosphate</name>
        <dbReference type="ChEBI" id="CHEBI:47942"/>
    </cofactor>
    <text evidence="2">Binds 5 phosphopantetheines covalently.</text>
</comment>
<comment type="pathway">
    <text evidence="13">Antibiotic biosynthesis.</text>
</comment>
<comment type="subunit">
    <text evidence="7 8 14 18">Homodimer (Probable) (PubMed:34985877). The loading module (LM, residues 13-926) dimerizes (PubMed:34985877, PubMed:37216195). LM cross-links to its cognate acyl-carrier domain in a manner that seems physiological; mutation of residues in the 2 domains alters reactions efficiency in a manner predicted by the cross-linked crystal (PubMed:37216195).</text>
</comment>
<comment type="domain">
    <text evidence="7 8 13">Type I modular polyketide synthases (PKS) catalyze the step-wise condensation of simple carboxylic acid derivatives. They are arranged into modules, where each module is comprised of a set of catalytic activities responsible for a single elongation of the polyketide chain and the appropriate reductive processing of the beta-keto functionality. A minimal elongation module contains a ketosynthase (KS) domain, an acyl transferase (AT) domain, and an acyl-carrier protein (ACP) domain. Optional modification (ketoreductase, dehydratase and enoylreductase) domains may also be present. The first module of this protein (loading module, LM) has a ketosynthase-like decarboxylase domain (PubMed:34985877, PubMed:37216195).</text>
</comment>
<comment type="miscellaneous">
    <text evidence="9 10">The macrolide antibiotics FD-891 and FD-892 induce morphological changes of human promyelocytic leukemia (HL-60) cells and have cytocidal activity against tumor cell lines in vitro (PubMed:8002384). FD-891 produced by Streptomyces sp. MAFF 225003 and MAFF 225006 inhibits growth of rice and alfalfa seedlings and may cause russet scab in potatoes (Ref.5).</text>
</comment>
<reference evidence="15" key="1">
    <citation type="journal article" date="2010" name="ChemBioChem">
        <title>Cloning and characterization of the biosynthetic gene cluster of 16-membered macrolide antibiotic FD-891: involvement of a dual functional cytochrome P450 monooxygenase catalyzing epoxidation and hydroxylation.</title>
        <authorList>
            <person name="Kudo F."/>
            <person name="Motegi A."/>
            <person name="Mizoue K."/>
            <person name="Eguchi T."/>
        </authorList>
    </citation>
    <scope>NUCLEOTIDE SEQUENCE [GENOMIC DNA]</scope>
    <scope>FUNCTION</scope>
    <scope>PATHWAY</scope>
    <scope>DOMAIN</scope>
    <source>
        <strain>A-8890</strain>
    </source>
</reference>
<reference key="2">
    <citation type="journal article" date="2010" name="ChemBioChem">
        <authorList>
            <person name="Kudo F."/>
            <person name="Motegi A."/>
            <person name="Mizoue K."/>
            <person name="Eguchi T."/>
        </authorList>
    </citation>
    <scope>ERRATUM OF PUBMED:20589823</scope>
</reference>
<reference key="3">
    <citation type="submission" date="2017-12" db="EMBL/GenBank/DDBJ databases">
        <authorList>
            <person name="Kudo F."/>
            <person name="Eguchi T."/>
        </authorList>
    </citation>
    <scope>SEQUENCE REVISION TO 488-502</scope>
</reference>
<reference key="4">
    <citation type="journal article" date="1994" name="J. Antibiot.">
        <title>Isolation and characterization of new 18-membered macrolides FD-891 and FD-892.</title>
        <authorList>
            <person name="Seki-Asano M."/>
            <person name="Okazaki T."/>
            <person name="Yamagishi M."/>
            <person name="Sakai N."/>
            <person name="Hanada K."/>
            <person name="Mizoue K."/>
        </authorList>
    </citation>
    <scope>ANTIBIOTIC ISOLATION AND ACTIVITY CHARACTERIZATION AGAINST HUMAN CELL LINES</scope>
    <source>
        <strain>A-8890</strain>
    </source>
</reference>
<reference key="5">
    <citation type="journal article" date="2005" name="J. Gen. Plant Pathol.">
        <title>Phytotoxin produced by Streptomyces sp. causing potato russet scab in Japan.</title>
        <authorList>
            <person name="Natsume M."/>
            <person name="Komiya M."/>
            <person name="Koyanagi F."/>
            <person name="Tashiro N."/>
            <person name="Kawaide H."/>
            <person name="Abe H."/>
        </authorList>
    </citation>
    <scope>ANTIBIOTIC ISOLATION AND ACTIVITY CHARACTERIZATION AGAINST PLANTS</scope>
</reference>
<reference evidence="16 17" key="6">
    <citation type="journal article" date="2022" name="ACS Chem. Biol.">
        <title>Structural Insight into the Reaction Mechanism of Ketosynthase-Like Decarboxylase in a Loading Module of Modular Polyketide Synthases.</title>
        <authorList>
            <person name="Chisuga T."/>
            <person name="Nagai A."/>
            <person name="Miyanaga A."/>
            <person name="Goto E."/>
            <person name="Kishikawa K."/>
            <person name="Kudo F."/>
            <person name="Eguchi T."/>
        </authorList>
    </citation>
    <scope>X-RAY CRYSTALLOGRAPHY (2.55 ANGSTROMS) OF 13-926</scope>
    <scope>X-RAY CRYSTALLOGRAPHY (2.65 ANGSTROMS) OF 13-926 IN COMPLEX WITH A MALONATE SUBSTRATE ANALOG</scope>
    <scope>FUNCTION OF LOADING MODULE AS A DECARBOXYLASE</scope>
    <scope>CATALYTIC ACTIVITY</scope>
    <scope>POSSIBLE ACTIVE SITE</scope>
    <scope>SUBUNIT</scope>
    <scope>DOMAIN</scope>
    <scope>MUTAGENESIS OF GLN-197; HIS-332; THR-334; THR-336 AND HIS-370</scope>
</reference>
<reference evidence="18" key="7">
    <citation type="journal article" date="2023" name="ACS Chem. Biol.">
        <title>Structure-Based Analysis of Transient Interactions between Ketosynthase-like Decarboxylase and Acyl Carrier Protein in a Loading Module of Modular Polyketide Synthase.</title>
        <authorList>
            <person name="Chisuga T."/>
            <person name="Murakami S."/>
            <person name="Miyanaga A."/>
            <person name="Kudo F."/>
            <person name="Eguchi T."/>
        </authorList>
    </citation>
    <scope>X-RAY CRYSTALLOGRAPHY (3.40 ANGSTROMS) OF 24-918 CROSS-LINKED WITH 946-1020</scope>
    <scope>FUNCTION OF LOADING MODULE AS A DECARBOXYLASE</scope>
    <scope>CATALYTIC ACTIVITY</scope>
    <scope>SUBUNIT</scope>
    <scope>MUTAGENESIS OF ARG-105; HIS-165; HIS-166; ARG-971; ASP-979; MET-982 AND GLU-985</scope>
</reference>
<name>GFSA_STRHA</name>
<feature type="chain" id="PRO_0000461663" description="Polyketide synthase GfsA">
    <location>
        <begin position="1"/>
        <end position="7481"/>
    </location>
</feature>
<feature type="domain" description="Ketosynthase family 3 (KS3) 1" evidence="3">
    <location>
        <begin position="26"/>
        <end position="451"/>
    </location>
</feature>
<feature type="domain" description="Carrier 1" evidence="2">
    <location>
        <begin position="945"/>
        <end position="1020"/>
    </location>
</feature>
<feature type="domain" description="Ketosynthase family 3 (KS3) 2" evidence="3">
    <location>
        <begin position="1038"/>
        <end position="1454"/>
    </location>
</feature>
<feature type="domain" description="Carrier 2" evidence="2">
    <location>
        <begin position="2442"/>
        <end position="2517"/>
    </location>
</feature>
<feature type="domain" description="Ketosynthase family 3 (KS3) 3" evidence="3">
    <location>
        <begin position="2538"/>
        <end position="2964"/>
    </location>
</feature>
<feature type="domain" description="Carrier 3" evidence="2">
    <location>
        <begin position="3988"/>
        <end position="4063"/>
    </location>
</feature>
<feature type="domain" description="Ketosynthase family 3 (KS3) 4" evidence="3">
    <location>
        <begin position="4084"/>
        <end position="4514"/>
    </location>
</feature>
<feature type="domain" description="Carrier 4" evidence="2">
    <location>
        <begin position="5561"/>
        <end position="5636"/>
    </location>
</feature>
<feature type="domain" description="Ketosynthase family 3 (KS3) 5" evidence="3">
    <location>
        <begin position="5655"/>
        <end position="6081"/>
    </location>
</feature>
<feature type="domain" description="PKS/mFAS DH" evidence="4">
    <location>
        <begin position="6561"/>
        <end position="6841"/>
    </location>
</feature>
<feature type="domain" description="Carrier 5" evidence="2">
    <location>
        <begin position="7325"/>
        <end position="7400"/>
    </location>
</feature>
<feature type="region of interest" description="Loading module (LM)" evidence="13">
    <location>
        <begin position="24"/>
        <end position="1020"/>
    </location>
</feature>
<feature type="region of interest" description="Disordered" evidence="5">
    <location>
        <begin position="60"/>
        <end position="80"/>
    </location>
</feature>
<feature type="region of interest" description="Module 1" evidence="13">
    <location>
        <begin position="1038"/>
        <end position="2517"/>
    </location>
</feature>
<feature type="region of interest" description="Module 2" evidence="13">
    <location>
        <begin position="2538"/>
        <end position="4063"/>
    </location>
</feature>
<feature type="region of interest" description="Module 3" evidence="13">
    <location>
        <begin position="4084"/>
        <end position="5636"/>
    </location>
</feature>
<feature type="region of interest" description="Module 4" evidence="13">
    <location>
        <begin position="5655"/>
        <end position="7400"/>
    </location>
</feature>
<feature type="region of interest" description="N-terminal hotdog fold" evidence="4">
    <location>
        <begin position="6561"/>
        <end position="6685"/>
    </location>
</feature>
<feature type="region of interest" description="C-terminal hotdog fold" evidence="4">
    <location>
        <begin position="6700"/>
        <end position="6841"/>
    </location>
</feature>
<feature type="active site" description="For decarboxylation activity of LM" evidence="14">
    <location>
        <position position="197"/>
    </location>
</feature>
<feature type="active site" description="For acyltransferase activity of LM" evidence="14">
    <location>
        <position position="662"/>
    </location>
</feature>
<feature type="active site" description="For beta-ketoacyl synthase 1 activity" evidence="3">
    <location>
        <position position="1201"/>
    </location>
</feature>
<feature type="active site" description="For beta-ketoacyl synthase 1 activity" evidence="3">
    <location>
        <position position="1336"/>
    </location>
</feature>
<feature type="active site" description="For beta-ketoacyl synthase 1 activity" evidence="3">
    <location>
        <position position="1376"/>
    </location>
</feature>
<feature type="active site" description="For beta-ketoacyl synthase 2 activity" evidence="3">
    <location>
        <position position="2711"/>
    </location>
</feature>
<feature type="active site" description="For beta-ketoacyl synthase 2 activity" evidence="3">
    <location>
        <position position="2846"/>
    </location>
</feature>
<feature type="active site" description="For beta-ketoacyl synthase 2 activity" evidence="3">
    <location>
        <position position="2886"/>
    </location>
</feature>
<feature type="active site" description="For beta-ketoacyl synthase 3 activity" evidence="3">
    <location>
        <position position="4261"/>
    </location>
</feature>
<feature type="active site" description="For beta-ketoacyl synthase 3 activity" evidence="3">
    <location>
        <position position="4396"/>
    </location>
</feature>
<feature type="active site" description="For beta-ketoacyl synthase 3 activity" evidence="3">
    <location>
        <position position="4436"/>
    </location>
</feature>
<feature type="active site" description="For beta-ketoacyl synthase 4 activity" evidence="3">
    <location>
        <position position="5828"/>
    </location>
</feature>
<feature type="active site" description="For beta-ketoacyl synthase 4 activity" evidence="3">
    <location>
        <position position="5963"/>
    </location>
</feature>
<feature type="active site" description="For beta-ketoacyl synthase 4 activity" evidence="3">
    <location>
        <position position="6003"/>
    </location>
</feature>
<feature type="active site" description="Proton acceptor; for dehydratase activity" evidence="4">
    <location>
        <position position="6593"/>
    </location>
</feature>
<feature type="active site" description="Proton donor; for dehydratase activity" evidence="4">
    <location>
        <position position="6761"/>
    </location>
</feature>
<feature type="modified residue" description="O-(pantetheine 4'-phosphoryl)serine" evidence="2">
    <location>
        <position position="980"/>
    </location>
</feature>
<feature type="modified residue" description="O-(pantetheine 4'-phosphoryl)serine" evidence="2">
    <location>
        <position position="2477"/>
    </location>
</feature>
<feature type="modified residue" description="O-(pantetheine 4'-phosphoryl)serine" evidence="2">
    <location>
        <position position="4023"/>
    </location>
</feature>
<feature type="modified residue" description="O-(pantetheine 4'-phosphoryl)serine" evidence="2">
    <location>
        <position position="5596"/>
    </location>
</feature>
<feature type="modified residue" description="O-(pantetheine 4'-phosphoryl)serine" evidence="2">
    <location>
        <position position="7360"/>
    </location>
</feature>
<feature type="mutagenesis site" description="Loading module (LM) has 8.2% activity on malonyl-GfsA-acyl carrier protein (ACP-LM) substrate." evidence="8">
    <original>R</original>
    <variation>A</variation>
    <location>
        <position position="105"/>
    </location>
</feature>
<feature type="mutagenesis site" description="LM has 11% activity on malonyl-GfsA-ACP-LM substrate." evidence="8">
    <original>H</original>
    <variation>A</variation>
    <location>
        <position position="165"/>
    </location>
</feature>
<feature type="mutagenesis site" description="LM has 10% activity on malonyl-GfsA-ACP-LM substrate." evidence="8">
    <original>H</original>
    <variation>A</variation>
    <location>
        <position position="166"/>
    </location>
</feature>
<feature type="mutagenesis site" description="LM has no activity on malonyl-GfsA-ACP-LM substrate." evidence="7">
    <original>Q</original>
    <variation>C</variation>
    <variation>L</variation>
    <location>
        <position position="197"/>
    </location>
</feature>
<feature type="mutagenesis site" description="LM has 0.5% activity on malonyl-GfsA-ACP-LM substrate." evidence="7">
    <original>Q</original>
    <variation>N</variation>
    <location>
        <position position="197"/>
    </location>
</feature>
<feature type="mutagenesis site" description="LM has no activity on malonyl-GfsA-ACP-LM substrate." evidence="7">
    <original>H</original>
    <variation>A</variation>
    <variation>N</variation>
    <variation>Q</variation>
    <location>
        <position position="332"/>
    </location>
</feature>
<feature type="mutagenesis site" description="LM has 8.4% activity on malonyl-GfsA-ACP-LM substrate." evidence="7">
    <original>T</original>
    <variation>A</variation>
    <location>
        <position position="334"/>
    </location>
</feature>
<feature type="mutagenesis site" description="LM has 100% activity on malonyl-GfsA-ACP-LM substrate." evidence="7">
    <original>T</original>
    <variation>S</variation>
    <location>
        <position position="334"/>
    </location>
</feature>
<feature type="mutagenesis site" description="LM has 1.2% activity on malonyl-GfsA-ACP-LM substrate." evidence="7">
    <original>T</original>
    <variation>A</variation>
    <variation>S</variation>
    <location>
        <position position="336"/>
    </location>
</feature>
<feature type="mutagenesis site" description="LM has no activity on malonyl-GfsA-ACP-LM substrate." evidence="7">
    <original>H</original>
    <variation>A</variation>
    <location>
        <position position="370"/>
    </location>
</feature>
<feature type="mutagenesis site" description="LM has 0.16% activity on malonyl-GfsA-ACP-LM substrate." evidence="7">
    <original>H</original>
    <variation>N</variation>
    <variation>Q</variation>
    <location>
        <position position="370"/>
    </location>
</feature>
<feature type="mutagenesis site" description="LM has 48% activity on malonyl-GfsA-ACP-LM substrate." evidence="8">
    <original>R</original>
    <variation>A</variation>
    <location>
        <position position="971"/>
    </location>
</feature>
<feature type="mutagenesis site" description="LM has 50% activity on malonyl-GfsA-ACP-LM substrate." evidence="8">
    <original>D</original>
    <variation>N</variation>
    <location>
        <position position="979"/>
    </location>
</feature>
<feature type="mutagenesis site" description="LM has 3% activity on malonyl-GfsA-ACP-LM substrate." evidence="8">
    <original>M</original>
    <variation>A</variation>
    <location>
        <position position="982"/>
    </location>
</feature>
<feature type="mutagenesis site" description="LM has 15% activity on malonyl-GfsA-ACP-LM substrate." evidence="8">
    <original>E</original>
    <variation>A</variation>
    <location>
        <position position="985"/>
    </location>
</feature>
<feature type="strand" evidence="19">
    <location>
        <begin position="29"/>
        <end position="38"/>
    </location>
</feature>
<feature type="strand" evidence="19">
    <location>
        <begin position="41"/>
        <end position="43"/>
    </location>
</feature>
<feature type="helix" evidence="19">
    <location>
        <begin position="44"/>
        <end position="52"/>
    </location>
</feature>
<feature type="strand" evidence="19">
    <location>
        <begin position="58"/>
        <end position="60"/>
    </location>
</feature>
<feature type="strand" evidence="19">
    <location>
        <begin position="85"/>
        <end position="87"/>
    </location>
</feature>
<feature type="strand" evidence="19">
    <location>
        <begin position="92"/>
        <end position="95"/>
    </location>
</feature>
<feature type="helix" evidence="19">
    <location>
        <begin position="98"/>
        <end position="100"/>
    </location>
</feature>
<feature type="helix" evidence="19">
    <location>
        <begin position="104"/>
        <end position="109"/>
    </location>
</feature>
<feature type="helix" evidence="19">
    <location>
        <begin position="112"/>
        <end position="128"/>
    </location>
</feature>
<feature type="helix" evidence="19">
    <location>
        <begin position="132"/>
        <end position="135"/>
    </location>
</feature>
<feature type="strand" evidence="19">
    <location>
        <begin position="141"/>
        <end position="145"/>
    </location>
</feature>
<feature type="helix" evidence="19">
    <location>
        <begin position="150"/>
        <end position="157"/>
    </location>
</feature>
<feature type="helix" evidence="19">
    <location>
        <begin position="167"/>
        <end position="171"/>
    </location>
</feature>
<feature type="helix" evidence="19">
    <location>
        <begin position="175"/>
        <end position="183"/>
    </location>
</feature>
<feature type="strand" evidence="19">
    <location>
        <begin position="190"/>
        <end position="193"/>
    </location>
</feature>
<feature type="helix" evidence="19">
    <location>
        <begin position="196"/>
        <end position="198"/>
    </location>
</feature>
<feature type="helix" evidence="19">
    <location>
        <begin position="199"/>
        <end position="212"/>
    </location>
</feature>
<feature type="strand" evidence="19">
    <location>
        <begin position="217"/>
        <end position="225"/>
    </location>
</feature>
<feature type="helix" evidence="19">
    <location>
        <begin position="230"/>
        <end position="239"/>
    </location>
</feature>
<feature type="strand" evidence="19">
    <location>
        <begin position="263"/>
        <end position="271"/>
    </location>
</feature>
<feature type="helix" evidence="19">
    <location>
        <begin position="272"/>
        <end position="278"/>
    </location>
</feature>
<feature type="strand" evidence="19">
    <location>
        <begin position="284"/>
        <end position="293"/>
    </location>
</feature>
<feature type="strand" evidence="20">
    <location>
        <begin position="298"/>
        <end position="302"/>
    </location>
</feature>
<feature type="helix" evidence="19">
    <location>
        <begin position="305"/>
        <end position="319"/>
    </location>
</feature>
<feature type="turn" evidence="19">
    <location>
        <begin position="323"/>
        <end position="325"/>
    </location>
</feature>
<feature type="strand" evidence="19">
    <location>
        <begin position="328"/>
        <end position="330"/>
    </location>
</feature>
<feature type="helix" evidence="19">
    <location>
        <begin position="339"/>
        <end position="350"/>
    </location>
</feature>
<feature type="turn" evidence="20">
    <location>
        <begin position="352"/>
        <end position="354"/>
    </location>
</feature>
<feature type="strand" evidence="19">
    <location>
        <begin position="359"/>
        <end position="362"/>
    </location>
</feature>
<feature type="helix" evidence="19">
    <location>
        <begin position="365"/>
        <end position="368"/>
    </location>
</feature>
<feature type="helix" evidence="19">
    <location>
        <begin position="372"/>
        <end position="374"/>
    </location>
</feature>
<feature type="helix" evidence="19">
    <location>
        <begin position="375"/>
        <end position="389"/>
    </location>
</feature>
<feature type="strand" evidence="19">
    <location>
        <begin position="399"/>
        <end position="401"/>
    </location>
</feature>
<feature type="helix" evidence="19">
    <location>
        <begin position="407"/>
        <end position="410"/>
    </location>
</feature>
<feature type="strand" evidence="19">
    <location>
        <begin position="412"/>
        <end position="414"/>
    </location>
</feature>
<feature type="strand" evidence="19">
    <location>
        <begin position="432"/>
        <end position="438"/>
    </location>
</feature>
<feature type="strand" evidence="19">
    <location>
        <begin position="442"/>
        <end position="450"/>
    </location>
</feature>
<feature type="strand" evidence="19">
    <location>
        <begin position="476"/>
        <end position="484"/>
    </location>
</feature>
<feature type="helix" evidence="19">
    <location>
        <begin position="485"/>
        <end position="500"/>
    </location>
</feature>
<feature type="helix" evidence="19">
    <location>
        <begin position="502"/>
        <end position="505"/>
    </location>
</feature>
<feature type="helix" evidence="19">
    <location>
        <begin position="509"/>
        <end position="518"/>
    </location>
</feature>
<feature type="strand" evidence="19">
    <location>
        <begin position="524"/>
        <end position="533"/>
    </location>
</feature>
<feature type="helix" evidence="19">
    <location>
        <begin position="534"/>
        <end position="544"/>
    </location>
</feature>
<feature type="strand" evidence="19">
    <location>
        <begin position="561"/>
        <end position="566"/>
    </location>
</feature>
<feature type="turn" evidence="19">
    <location>
        <begin position="574"/>
        <end position="577"/>
    </location>
</feature>
<feature type="helix" evidence="19">
    <location>
        <begin position="578"/>
        <end position="583"/>
    </location>
</feature>
<feature type="helix" evidence="19">
    <location>
        <begin position="585"/>
        <end position="604"/>
    </location>
</feature>
<feature type="helix" evidence="19">
    <location>
        <begin position="615"/>
        <end position="620"/>
    </location>
</feature>
<feature type="helix" evidence="19">
    <location>
        <begin position="626"/>
        <end position="628"/>
    </location>
</feature>
<feature type="helix" evidence="19">
    <location>
        <begin position="630"/>
        <end position="650"/>
    </location>
</feature>
<feature type="strand" evidence="19">
    <location>
        <begin position="656"/>
        <end position="661"/>
    </location>
</feature>
<feature type="helix" evidence="19">
    <location>
        <begin position="664"/>
        <end position="671"/>
    </location>
</feature>
<feature type="helix" evidence="19">
    <location>
        <begin position="677"/>
        <end position="692"/>
    </location>
</feature>
<feature type="strand" evidence="19">
    <location>
        <begin position="698"/>
        <end position="703"/>
    </location>
</feature>
<feature type="helix" evidence="19">
    <location>
        <begin position="707"/>
        <end position="714"/>
    </location>
</feature>
<feature type="turn" evidence="19">
    <location>
        <begin position="718"/>
        <end position="720"/>
    </location>
</feature>
<feature type="strand" evidence="19">
    <location>
        <begin position="721"/>
        <end position="728"/>
    </location>
</feature>
<feature type="strand" evidence="19">
    <location>
        <begin position="731"/>
        <end position="737"/>
    </location>
</feature>
<feature type="helix" evidence="19">
    <location>
        <begin position="738"/>
        <end position="750"/>
    </location>
</feature>
<feature type="strand" evidence="19">
    <location>
        <begin position="755"/>
        <end position="757"/>
    </location>
</feature>
<feature type="helix" evidence="19">
    <location>
        <begin position="767"/>
        <end position="769"/>
    </location>
</feature>
<feature type="helix" evidence="19">
    <location>
        <begin position="770"/>
        <end position="780"/>
    </location>
</feature>
<feature type="strand" evidence="19">
    <location>
        <begin position="789"/>
        <end position="793"/>
    </location>
</feature>
<feature type="turn" evidence="19">
    <location>
        <begin position="795"/>
        <end position="797"/>
    </location>
</feature>
<feature type="strand" evidence="19">
    <location>
        <begin position="798"/>
        <end position="801"/>
    </location>
</feature>
<feature type="helix" evidence="19">
    <location>
        <begin position="803"/>
        <end position="806"/>
    </location>
</feature>
<feature type="helix" evidence="19">
    <location>
        <begin position="809"/>
        <end position="817"/>
    </location>
</feature>
<feature type="helix" evidence="19">
    <location>
        <begin position="822"/>
        <end position="831"/>
    </location>
</feature>
<feature type="strand" evidence="19">
    <location>
        <begin position="834"/>
        <end position="844"/>
    </location>
</feature>
<feature type="helix" evidence="19">
    <location>
        <begin position="845"/>
        <end position="853"/>
    </location>
</feature>
<feature type="strand" evidence="19">
    <location>
        <begin position="862"/>
        <end position="864"/>
    </location>
</feature>
<feature type="strand" evidence="19">
    <location>
        <begin position="868"/>
        <end position="870"/>
    </location>
</feature>
<feature type="helix" evidence="19">
    <location>
        <begin position="872"/>
        <end position="885"/>
    </location>
</feature>
<feature type="helix" evidence="19">
    <location>
        <begin position="892"/>
        <end position="895"/>
    </location>
</feature>
<feature type="strand" evidence="19">
    <location>
        <begin position="896"/>
        <end position="899"/>
    </location>
</feature>
<feature type="helix" evidence="21">
    <location>
        <begin position="949"/>
        <end position="959"/>
    </location>
</feature>
<feature type="helix" evidence="21">
    <location>
        <begin position="964"/>
        <end position="966"/>
    </location>
</feature>
<feature type="helix" evidence="21">
    <location>
        <begin position="973"/>
        <end position="976"/>
    </location>
</feature>
<feature type="helix" evidence="21">
    <location>
        <begin position="980"/>
        <end position="990"/>
    </location>
</feature>
<feature type="helix" evidence="21">
    <location>
        <begin position="1002"/>
        <end position="1005"/>
    </location>
</feature>
<feature type="helix" evidence="21">
    <location>
        <begin position="1009"/>
        <end position="1013"/>
    </location>
</feature>
<feature type="strand" evidence="21">
    <location>
        <begin position="1015"/>
        <end position="1018"/>
    </location>
</feature>
<sequence length="7481" mass="779174">MNHIPVNRGVCLMGRSQNSEFETASDEPIAVIGLSCRLPKASGPQELWQLLDDGASAVTRVPADRETPPSTEEESADGEAAGARWGGFLDRVDTFDAGFFGISPREAAAMDPQQRLVLELSWEALEGAGLVPATLRDTGLGVFVGAARDDYATLYRRREGRAVDHHAMTGLHRSLIANRISYALGAHGPSMVVDTGQSSSLVAVHLACESLRRGESDIALAGGVNLNIAAESARETAAFGGLSPDGQCFTFDARANGFVRGEGGGLVVLKTLRRALADGDLVHGVILASAVNNDGPSDTLTTPSRRAQESLLTRVYRRAGVTPTEVGYVELHGTGTKVGDPIEAAALGAVLGTGRDTPLPVGSIKTNIGHLEGAAGIAGLIKALLQLRRRRLVPSLNFSTPNPDIPLDALNLRVQQESAPWATPSGGGRTLVAGVSSFGMGGTNCHVVVSAAPVPEDGETTSEAGATGPDSGPALLPWVVSARSPQALRDQAGRLAAWADSPAGREASPVDIGWSLATSRTHFEYRAVVSGSDRDELVASLRALASGSPVTAAGAVDGGGRLGLVFSGQGSQRAGMGRELYVAFPVFAEAFDEVCGVLDEVMGALPPSEGWAGSLREVMFEVSSDLLDETGFTQPALFAFEVALYRLLESWGVAGEVVAGHSVGEIAAVHVAGVLSLADACALVAARGRLMQGLPSGGAMVAVEASEEEVTALLAGREGEVGIGAVNGPRSVVVSGGVAVVEEVAAHFAGLGRRARRLKVSHAFHSPLMDPMLEDFGRVVAGLSFAVPELTVVSGLTGAVVSADELCSVGYWVRHAREAVRFADAVGAMAGVGVGRFVEVGPGGVLSALVRECLAEGGAGSVVAAVRGNRAEPVALLSAVGELFADGYPVDWTAYFAGWPAARVELPTYAFQRSRHWLENVPELAVSTTPPAVPREPVTPDSDHPDPVETVRQLTAHVLGLTAAADVEMTRSFKDLGFDSLMSVELRDRLCAATGLSLATTLLYDHPSPAETAEFVRARLTGDEAAAVEVVAARAVEDEPIAVVAMSCRFPGGVRTPEDLWELVRDRVDAVSVFPSDRGWNADAGLFPPAGGFLYDGHHFDAEFFGISPREALAMDPQQRLLLETSWEAFERAGIDPVSLRGSRTGVFVGATAQDYTPKLGEPADGLEGHLLTGGTVSVASGRISYFLGLEGPAVTVDTACSSSLVSLHLACRSLRQGETTLALAGGVTLMATPGMFAEFSRQGGLAADGRCKAFAEAADGTGWAEGVGLVLLERLSDARRNGHPVLAVVRGSAVNQDGASNGLTAPNGPSQQRVIRQALADARLAPADVDLMEAHGTGTRLGDPIEAQALLATYGQGRSGDRPLWLGSVKSNIGHTQAAAGVAGLIKTVMAMRHGTMPATLHVDRPSSHVDWSTGAVELLTEAQPWPDTERPRRAAVSSFGVSGTNAHVILEQATEPAALDAAPDAIVSDAVVAWPLSARDVGALREQAVRLVARVTGDPYVRPADVGHSLAATRSSFEHRAVVVGRERAELLAGLEALASGETAANLATGRASADGAGKVVFVFPGQGSQWPGMGLELAAHSPVFAAVLEDCGRALAAYVDWDGHTLHEVLAQEDGAPSLERVDVVQPALWAVMVALAALWRSHGVQPDAVVGHSQGEIAAACVAGALTLDEAAQVVSLRSRAITALAGAGQMVSVPLPEADTAEWIRPWADAGQIGIAAVNGPGSTVVSGDSAAMDELMEALAAQDVRARRIPVDYASHSPQVARIRDELLHALDGLTPRPATVPVFSTVTGEWLDDTTPMDAEYWYRNLRQTVRFEEAVRALADSGCGVFIEASPHPVLTIGVQETLDVLDRTGVVTGSLRRQKGGPDRFLSSLAQVHTHGGRVDWDTVFAGTGATRTDLPTYPFQRHRYWLERPQAPAVAPAASPAASVSETDSTRYRVVFKPLPEPTAARLSGTWLLVVPDTDEPDARVDAVTGALVTAGATVERIVVEAGADRADLAELLAALATDVGGVRGVVSLLALSEDADAMRPSVPSGLASTLTLVQALGDADVSAPLWCLTRGAVSVGASDRLDSPVQALVWGLGRAAAVEHPERWGGLLDLPATLTGRVLDRLVGVLAADGDEDQVAVRAAGVFGRRLVRGNSAPTRIDHSWQAGGTVLVTGGTGALGARVARWLVDSGAEHVVVASRQGADAPGADRLRDELTGLGARVTPVACDVSDRSAVAELVDRCAEQGDPIRAVVHTAGVGVTKPLADTTPDDLAVSFDAKVAGATHLADALGADLDAFVLFSSAAGVWGSGGQGAYGAANAYLDALAAQRAADGLAATAVAWGPWDGGGMSADAAVIDMDALRRSGLTAMDPDRAIDALDRALTDGETALTVVDVDWTRFAEVFTTARRSPLLADLPEAARLVGPAPTARENSSPVAARLAKASSAAEGRRVLLDLVRGRVADVLGHATPDTIRADRPFKDLGFNSLMTLELRSGLNEATGLRLSATTLFDHPTPSALAEHLAGELLGTPRAEAGPEMPATAPEVTEDPIAIVAMSCRFPGGVGSPEALWRLVADRRDVISGMPADRGWDIDGIYDPVPGVPGRTYTRQGGFLDGVGEFDAEFFGISPREATAMDPQQRLLLETSWEAFERAGIDPTQLRGDSVGVFVGCTGQDYVPRLHETSDELGGYALTGAAGSVASGRVAYTFGLEGPAVTVDTGCSASLVALHLAVQSLSRGECSLALAGGVTVMSNPGTFIEFSRQRGLAADGRCKAFSDSADGTGWAEGVGMLLVERLSDARRNGHEVLAVVRGSAINQDGASNGLTAPNGRSQQRVIRQALASASLTPAEVDVVEAHGTGTKLGDPIEAQALLATYGQDRPAERPLLLGALKSNIGHTQAAAGVAGVIKMVLAMRHGVAPQTLHVEQPTAEVDWSAGAVELLTEARPWPDADRPRRAGVSAFGVGGTNAHVIIEEAQSAPAQERTAPEPPAALPWLVSGATPDALRAQAERLLTHLADQPETHAADVAYSLSLTRSSLDHRAAVVAADRDELLAGLAALAEGRSAPGLVRGAPHSGDRVAFVFPGQGSQWPGMAQELAAAFPAFAARLRACEDALAEFVDWSLTDVLSEAPDAPPLDRVDVVQPVLWAVMVSLAELWRSYGVEPDAVLGHSQGEIAAACVAGALTLQDAARVVALRSKAIVAIAGQGGMLSVPLSREGLRPHLARWQDRLSVAAVNGPETVVLSGDVQAVDGLCAELQGEQIRAKKIQVDYASHSAHVEAIEAELFDALAPITPRAGSVPFFSTVTGDWYDTTGLDAGYWYRNLRQTVELHRATEALVEQGFGVFVESSPHPVLAVGMQDTVEAAGGDAVILGSLRRDDGGPDRFLRSLAEAHTHAVGVDWHALFTDGAGHRVELPTYAFQRKRYWLQDTAPEHRADAPAVDPVDAAFWEAVEREDLDALAGVLDLGTPDDTASLDTVLPALPVLSSWRRKRLDRSTVDAWRYRVEWRRIDDAPAPATLTGTWLVVIPEGYEADERVTASARALAERGADVVEVRVDEAGEDRTALAERLSDTGADTGPVAGVLSFLALAEQGFPQHPEVPTGLALTLHLVQALGDAGIDAPLWSVTSGAVSTGDDEAPSHPVQAHIWGMGRVAALEHSERWGGLVDLPEAPDEQAARRLGAVLADTRGEDQVAIRPSGLYGRRLARAAATEAGERQRWTPRGTVLITGGTGALGAHVARRLAAQGAEHLVLVSRSGEAAPGADDLRTKLGVPVTVAACDIADRDQVAALLARLEADGTPVRTVVHTAGVARLTPLAQTDLAELADVLSGKAAGARHLLELLDLDNLDTFVLFSSIAAAWGVADHGAYAAANAYLDAMALQYRAQGLPVSSVGWGPWDGDGMVSLNKLLARRGIPVIAPDLAITALQQALDERDTYVAVADVDWDRFTQVFTSARPSPLLADFTETAADDRETASATAHGTDSELVRRLNALPEDERAQALQDLVLTEAAAVLGHTTTDALGAVRPYRDLGFDSLTSVEFRNRLRDATGLALPATLVFDHPTPQATTEYLLQRIAGDKPIVDRASSSAVAAVEADDPIAIVAMGCRYPGGVASPEELWELMAAEGDAISGFPTDRGWDLDALYDPDPDRAGHTYVREGGFLHDAAEFDAEFFGISPREASAMDPQQRLLLETSWEAFERAGIDPAALRGSATGVFVGSNYQDYGLGSGSGSQQSSGVSEGHELIGSAPSVLSGRLSYTFGLEGPAVTVDTACSSSLVALHLAVQSLRQGESDLALAGGVAYMANPRAFVGFSRQRGLARDARCKAFADRADGMTLAEGVGLVLLERLSDARRLGHPVLAVVRGSAINQDGASNGLTAPNGPAQQRVIRQALANARLTPSEVDVVEAHGTGTALGDPIEAQALLATYGQERVEGQPLWLGSVKSNIGHTQAAAGVASVIKTVLAMGRGTVPATLHVDRPSSHVDWSAGAVELLTEARAWPENGHPRRAGVSSFGISGTNAHVILEQAPAESGEPPQQDLPVDGESAASVVPWVVSARSVRALQAQAGQLAAWAASPAGEQASPADVAQALATTRTFFEYRTVVVGGDRAELVETLRSLSTDPSAAGTVRRADTDGGGRLGLVFSGQGSQRAGMGRELYVAFPVFAEAFDEVCGVLDEVMGALPPSEGWAGSLREVMFDVAGGSLDETGFTQPALFAFEVALYRLLESWGVAGEVVAGHSVGEIAAVHVAGVLSLADACALVAARGRLMQGLPSGGAMVAVEASEEEVTALLAGREGEVGIGAVNGPRSVVVSGGVAVVEEVAAHFAGLGRRARRLKVSHAFHSPLMDPMLEDFGRVVAGLSFAVPELTVVSGLTGAVVSADELCSVGYWVRHAREAVRFADAVGAMAGVGVGRFVEVGPGGVLSALVRECLAEGGAGSVVAAVRGNRAEPVALVSAVGELFADGYPVDWTAYFAGWPAARVELPTYAFQRSRYWLEELAGTAVRRTEAGGQDEVDAAFWEAVEQGDLSSLGTGEGVDGEARLADVLPVLSSWRRQAGQVSLADSWRYRVTWNALPEPGVASFGGTWLLLAPAGSEAAGSLVRSLAEAMAEHGAEVVTVDLGHPDSDRARDALAEQITGRLDGLAPGQVGGVVSLLALAEGTDPHHPTVSRGLALTLSAVQALGDAGVTAPLWCLTRGAVSAGATSGPDEPVQAQVWGLGRVAALEHPDRWGGLLDLPEQVDSRTVRRLVRALAAGHRPGGEDQIALRTAGVLARRLVQDAAPAGDSVAWTPSGTVLVTGGTGAVGGHVARWLAARGAERVVLVSRRGPEAPGAQALHDELTEAGVRVRLVACDLRDQEAVTALVAGLADEGDLTAVVHAAGVLDDGVLASLSVERCAEVLAAKAQAAHHLDLATREVDLDAFVLFSSASGVLGSAGQANYAAANAYLDALAELRHALGLPAVSLAWGRWADGGMADQDVVAGRLDRDGWPAMAAEAALNAMARAVTAGRPAVMVADVDWQRFAPAFTAARPSPLLSALPQAQLPTAAAHGPAEGEQSSWASRLAELPAAEQQTALLDLIRGQVASVLGHASVQTIDPARAFKEIGFDSLTAVELRNRLNAATGLALPTTLVFDYPTPEALAEYVGSEVLGTSSSAAVGGPLVVAAVDEPVAIIGMSCRFPGGVQSPEELWDLVAGGRDTISSFPADRGWDIDTLFDPDGERSGTSSTRYGAFLDGAADFDPAFFDIGPREATAMDPQQRLLLETAWEAFERAGIDPAALRGSATGVFTGTNGQDYATLASGAAAEFEGYLGIGNAGSVISGRLAYTFGLEGPAMTVDTACSASLVALHLAAQALRQGECSLALAGGATVMATPGAFVEFSRQRGLAPDGRCKAFSASADGTGWGEGAGMLLLERLSDAERNGHPILAVVRGSAVNQDGASNGLTAPNGPAQQRVIRQALANARLSASEVDVVEAHGTGTKLGDPIEAQALLATYGQDRAEDRPLWLGSVKSNLGHTQAAAGVAGIIKSVMAMRHGTLPATLHVDEPTPEVNWSTGAVELLTESRPWPATDHVRRAAVSSFGVSGTNAHVILEQAADPVAEAESGAALVPDAVPVPWVVSARSADAVREQARRLHTHLMTGREWRPADVGYSLATARSRFEHRAVVLGEDQGELLEALEALAEGRGDSRVRVGAGLAGGRTGFVFAGQGSQRLGMGGRLREMFPVFGEAWDEVVAELDGRLGRPLGEVVFAEEGSEQASLVDRTEFTQPALFAFEVALFRLLESWGVVPDVVAGHSIGELAAAYVAGVLSLSDACALVVARGRLMQALPAGGAMVAVQVTEAEARRLVEGEPSGAVDIAAVNGPESVVIAGDEDVVLRVQEIVRGRGRKTKRLTVSHAFHSPRMEPMLDEFRRVAETVTYHEPRIAVVSAVSGEVAGAELRSAEYWTRHVREAVRFYDAVRCLRSEGVSTFVEVGPDGALSALGQDCLVGEEARGTEFVSTVRAGRDEAESVVAAVGAAHVRGVPVDWAAYYAPYGPRRADLPTYAFEHQRYWLDTSARPGRDATGLGLGSAEHPLLGAAVALADGDGVLLTGRLSLATHPWLADHQVQGAVLFPGTAFVELALRAGEQVGADCVEELTLEVPLVLPERGGVQVQVVVGAADEQGGRPVTVHSRPETGVDEPWTRHATGVLASGAATVPAETGELAVWPPQGATAVDIDGLYDRLVDGGFGYGPVFQGLRAVWRRGSEVFAEVALDDTHRDGAGEFGLHPALLDAALHAIGFGEFVSDGGAGVLPFSWNGVHLYASGADALRVRVSGVGVGANEVALVVADGSGRPVAAVESLVLRPVSADTIAAGAGARQSLFRVGWRQVAVPDQAGAGEWVALDRGAGWAQGEGCEVLPDLAALGSAVSAGRSVPRLVVAHFAADREVPVTAGVRGVTAEGLELIQSWLADERFADSRLVIMTRQAVAVDAGEGVFDLGAAALWGLVRTAQSEQPGRVVLVDVDDLDAVSRVVGIGDEPQLAVRDGRVFVPRLMRAEAIDGVPVWDPEGTLLITGASGALGGVVARHVVREWGVRHLVLASRRGAEAPGMTELVAELGELGASAAPVACDVADRDALAAVLAGIPAVHRLAGVVHAAGVLDDGVVGSLTPERLETVLAPKADAAWHLHELAAELDLSVFVLFSSAASVFGGAGQGNYAAANAFLDALAARRRADGLVATSLSWGLWDQAGGMTGQLGEADVARMSRSGVLPISVGEALPLLDAGVTGGDAWLAPVRLDLAALRQQAIATGGVPALLRDLVRVPNRRKAETGGSSTGGSRSTLLDKLAGLTDAEREQELLDFVCEHTAAVLGHSGAGMVDPGRGFLEAGVDSLAAVELRNRIGGVLGIRLSATLVFDYPSPVLLAGHIGEQLALDEPAPEPMMAAELERLEAAVTAGRFDDASRDEVAVRLRKLLTYFDTVADTARGETDDGDVASASVDELFALLDEELDDR</sequence>
<organism>
    <name type="scientific">Streptomyces halstedii</name>
    <dbReference type="NCBI Taxonomy" id="1944"/>
    <lineage>
        <taxon>Bacteria</taxon>
        <taxon>Bacillati</taxon>
        <taxon>Actinomycetota</taxon>
        <taxon>Actinomycetes</taxon>
        <taxon>Kitasatosporales</taxon>
        <taxon>Streptomycetaceae</taxon>
        <taxon>Streptomyces</taxon>
    </lineage>
</organism>
<gene>
    <name evidence="11" type="primary">gfsA</name>
</gene>
<protein>
    <recommendedName>
        <fullName evidence="12">Polyketide synthase GfsA</fullName>
        <ecNumber evidence="1">2.3.1.-</ecNumber>
        <ecNumber evidence="7 8">4.1.1.-</ecNumber>
    </recommendedName>
    <alternativeName>
        <fullName evidence="11">FD-891 synthase GfsA, loading and modules 1 to 4</fullName>
    </alternativeName>
</protein>